<sequence>MDKLIIKGGKKLIGEVSVSGSKNAALPIFVSTILAPGLNEIRNVPFLRDINTTIKVLESLGAVVEGNGNIVRIDTTHVNNVEATYDLVKTMRASVLVLGPLLARHGRARVSLPGGCAIGARPINLHLKGLAALGADIRLEHGYVEAKAKKLKGARINFDISTVGGTEQLMMAAALAKGETVLENAAREPEIIDLAEILIKMGAKIDGAGTDTIRITGVKELAPVAHDVMPDRIEAGTFMVAAAITGGDIKIRNMKLEHLDALVFKLQDAGVEITNRDNVVRVKGPRRPKAVNIKTRPYPGFPTDMQAQFMALMCVADGASVISENIFENRFMHVSELLRFGADITVEGSTATVKGVKKLSGAPVMATDLRASASLILAGLAADNTTEISRIYHLDRGYESIEKKLAGLGADIQRVKE</sequence>
<name>MURA_GEOSL</name>
<keyword id="KW-0131">Cell cycle</keyword>
<keyword id="KW-0132">Cell division</keyword>
<keyword id="KW-0133">Cell shape</keyword>
<keyword id="KW-0961">Cell wall biogenesis/degradation</keyword>
<keyword id="KW-0963">Cytoplasm</keyword>
<keyword id="KW-0573">Peptidoglycan synthesis</keyword>
<keyword id="KW-0670">Pyruvate</keyword>
<keyword id="KW-1185">Reference proteome</keyword>
<keyword id="KW-0808">Transferase</keyword>
<dbReference type="EC" id="2.5.1.7" evidence="1"/>
<dbReference type="EMBL" id="AE017180">
    <property type="protein sequence ID" value="AAR36493.1"/>
    <property type="molecule type" value="Genomic_DNA"/>
</dbReference>
<dbReference type="RefSeq" id="NP_954143.1">
    <property type="nucleotide sequence ID" value="NC_002939.5"/>
</dbReference>
<dbReference type="RefSeq" id="WP_010943723.1">
    <property type="nucleotide sequence ID" value="NC_002939.5"/>
</dbReference>
<dbReference type="SMR" id="Q748B3"/>
<dbReference type="FunCoup" id="Q748B3">
    <property type="interactions" value="480"/>
</dbReference>
<dbReference type="STRING" id="243231.GSU3102"/>
<dbReference type="EnsemblBacteria" id="AAR36493">
    <property type="protein sequence ID" value="AAR36493"/>
    <property type="gene ID" value="GSU3102"/>
</dbReference>
<dbReference type="KEGG" id="gsu:GSU3102"/>
<dbReference type="PATRIC" id="fig|243231.5.peg.3126"/>
<dbReference type="eggNOG" id="COG0766">
    <property type="taxonomic scope" value="Bacteria"/>
</dbReference>
<dbReference type="HOGENOM" id="CLU_027387_0_0_7"/>
<dbReference type="InParanoid" id="Q748B3"/>
<dbReference type="OrthoDB" id="9803760at2"/>
<dbReference type="UniPathway" id="UPA00219"/>
<dbReference type="Proteomes" id="UP000000577">
    <property type="component" value="Chromosome"/>
</dbReference>
<dbReference type="GO" id="GO:0005737">
    <property type="term" value="C:cytoplasm"/>
    <property type="evidence" value="ECO:0007669"/>
    <property type="project" value="UniProtKB-SubCell"/>
</dbReference>
<dbReference type="GO" id="GO:0008760">
    <property type="term" value="F:UDP-N-acetylglucosamine 1-carboxyvinyltransferase activity"/>
    <property type="evidence" value="ECO:0000318"/>
    <property type="project" value="GO_Central"/>
</dbReference>
<dbReference type="GO" id="GO:0051301">
    <property type="term" value="P:cell division"/>
    <property type="evidence" value="ECO:0007669"/>
    <property type="project" value="UniProtKB-KW"/>
</dbReference>
<dbReference type="GO" id="GO:0071555">
    <property type="term" value="P:cell wall organization"/>
    <property type="evidence" value="ECO:0007669"/>
    <property type="project" value="UniProtKB-KW"/>
</dbReference>
<dbReference type="GO" id="GO:0009252">
    <property type="term" value="P:peptidoglycan biosynthetic process"/>
    <property type="evidence" value="ECO:0000318"/>
    <property type="project" value="GO_Central"/>
</dbReference>
<dbReference type="GO" id="GO:0008360">
    <property type="term" value="P:regulation of cell shape"/>
    <property type="evidence" value="ECO:0007669"/>
    <property type="project" value="UniProtKB-KW"/>
</dbReference>
<dbReference type="GO" id="GO:0019277">
    <property type="term" value="P:UDP-N-acetylgalactosamine biosynthetic process"/>
    <property type="evidence" value="ECO:0007669"/>
    <property type="project" value="InterPro"/>
</dbReference>
<dbReference type="CDD" id="cd01555">
    <property type="entry name" value="UdpNAET"/>
    <property type="match status" value="1"/>
</dbReference>
<dbReference type="FunFam" id="3.65.10.10:FF:000001">
    <property type="entry name" value="UDP-N-acetylglucosamine 1-carboxyvinyltransferase"/>
    <property type="match status" value="1"/>
</dbReference>
<dbReference type="Gene3D" id="3.65.10.10">
    <property type="entry name" value="Enolpyruvate transferase domain"/>
    <property type="match status" value="2"/>
</dbReference>
<dbReference type="HAMAP" id="MF_00111">
    <property type="entry name" value="MurA"/>
    <property type="match status" value="1"/>
</dbReference>
<dbReference type="InterPro" id="IPR001986">
    <property type="entry name" value="Enolpyruvate_Tfrase_dom"/>
</dbReference>
<dbReference type="InterPro" id="IPR036968">
    <property type="entry name" value="Enolpyruvate_Tfrase_sf"/>
</dbReference>
<dbReference type="InterPro" id="IPR050068">
    <property type="entry name" value="MurA_subfamily"/>
</dbReference>
<dbReference type="InterPro" id="IPR013792">
    <property type="entry name" value="RNA3'P_cycl/enolpyr_Trfase_a/b"/>
</dbReference>
<dbReference type="InterPro" id="IPR005750">
    <property type="entry name" value="UDP_GlcNAc_COvinyl_MurA"/>
</dbReference>
<dbReference type="NCBIfam" id="TIGR01072">
    <property type="entry name" value="murA"/>
    <property type="match status" value="1"/>
</dbReference>
<dbReference type="NCBIfam" id="NF006873">
    <property type="entry name" value="PRK09369.1"/>
    <property type="match status" value="1"/>
</dbReference>
<dbReference type="PANTHER" id="PTHR43783">
    <property type="entry name" value="UDP-N-ACETYLGLUCOSAMINE 1-CARBOXYVINYLTRANSFERASE"/>
    <property type="match status" value="1"/>
</dbReference>
<dbReference type="PANTHER" id="PTHR43783:SF1">
    <property type="entry name" value="UDP-N-ACETYLGLUCOSAMINE 1-CARBOXYVINYLTRANSFERASE"/>
    <property type="match status" value="1"/>
</dbReference>
<dbReference type="Pfam" id="PF00275">
    <property type="entry name" value="EPSP_synthase"/>
    <property type="match status" value="1"/>
</dbReference>
<dbReference type="SUPFAM" id="SSF55205">
    <property type="entry name" value="EPT/RTPC-like"/>
    <property type="match status" value="1"/>
</dbReference>
<evidence type="ECO:0000255" key="1">
    <source>
        <dbReference type="HAMAP-Rule" id="MF_00111"/>
    </source>
</evidence>
<reference key="1">
    <citation type="journal article" date="2003" name="Science">
        <title>Genome of Geobacter sulfurreducens: metal reduction in subsurface environments.</title>
        <authorList>
            <person name="Methe B.A."/>
            <person name="Nelson K.E."/>
            <person name="Eisen J.A."/>
            <person name="Paulsen I.T."/>
            <person name="Nelson W.C."/>
            <person name="Heidelberg J.F."/>
            <person name="Wu D."/>
            <person name="Wu M."/>
            <person name="Ward N.L."/>
            <person name="Beanan M.J."/>
            <person name="Dodson R.J."/>
            <person name="Madupu R."/>
            <person name="Brinkac L.M."/>
            <person name="Daugherty S.C."/>
            <person name="DeBoy R.T."/>
            <person name="Durkin A.S."/>
            <person name="Gwinn M.L."/>
            <person name="Kolonay J.F."/>
            <person name="Sullivan S.A."/>
            <person name="Haft D.H."/>
            <person name="Selengut J."/>
            <person name="Davidsen T.M."/>
            <person name="Zafar N."/>
            <person name="White O."/>
            <person name="Tran B."/>
            <person name="Romero C."/>
            <person name="Forberger H.A."/>
            <person name="Weidman J.F."/>
            <person name="Khouri H.M."/>
            <person name="Feldblyum T.V."/>
            <person name="Utterback T.R."/>
            <person name="Van Aken S.E."/>
            <person name="Lovley D.R."/>
            <person name="Fraser C.M."/>
        </authorList>
    </citation>
    <scope>NUCLEOTIDE SEQUENCE [LARGE SCALE GENOMIC DNA]</scope>
    <source>
        <strain>ATCC 51573 / DSM 12127 / PCA</strain>
    </source>
</reference>
<protein>
    <recommendedName>
        <fullName evidence="1">UDP-N-acetylglucosamine 1-carboxyvinyltransferase</fullName>
        <ecNumber evidence="1">2.5.1.7</ecNumber>
    </recommendedName>
    <alternativeName>
        <fullName evidence="1">Enoylpyruvate transferase</fullName>
    </alternativeName>
    <alternativeName>
        <fullName evidence="1">UDP-N-acetylglucosamine enolpyruvyl transferase</fullName>
        <shortName evidence="1">EPT</shortName>
    </alternativeName>
</protein>
<accession>Q748B3</accession>
<comment type="function">
    <text evidence="1">Cell wall formation. Adds enolpyruvyl to UDP-N-acetylglucosamine.</text>
</comment>
<comment type="catalytic activity">
    <reaction evidence="1">
        <text>phosphoenolpyruvate + UDP-N-acetyl-alpha-D-glucosamine = UDP-N-acetyl-3-O-(1-carboxyvinyl)-alpha-D-glucosamine + phosphate</text>
        <dbReference type="Rhea" id="RHEA:18681"/>
        <dbReference type="ChEBI" id="CHEBI:43474"/>
        <dbReference type="ChEBI" id="CHEBI:57705"/>
        <dbReference type="ChEBI" id="CHEBI:58702"/>
        <dbReference type="ChEBI" id="CHEBI:68483"/>
        <dbReference type="EC" id="2.5.1.7"/>
    </reaction>
</comment>
<comment type="pathway">
    <text evidence="1">Cell wall biogenesis; peptidoglycan biosynthesis.</text>
</comment>
<comment type="subcellular location">
    <subcellularLocation>
        <location evidence="1">Cytoplasm</location>
    </subcellularLocation>
</comment>
<comment type="similarity">
    <text evidence="1">Belongs to the EPSP synthase family. MurA subfamily.</text>
</comment>
<organism>
    <name type="scientific">Geobacter sulfurreducens (strain ATCC 51573 / DSM 12127 / PCA)</name>
    <dbReference type="NCBI Taxonomy" id="243231"/>
    <lineage>
        <taxon>Bacteria</taxon>
        <taxon>Pseudomonadati</taxon>
        <taxon>Thermodesulfobacteriota</taxon>
        <taxon>Desulfuromonadia</taxon>
        <taxon>Geobacterales</taxon>
        <taxon>Geobacteraceae</taxon>
        <taxon>Geobacter</taxon>
    </lineage>
</organism>
<proteinExistence type="inferred from homology"/>
<gene>
    <name evidence="1" type="primary">murA</name>
    <name type="ordered locus">GSU3102</name>
</gene>
<feature type="chain" id="PRO_0000231208" description="UDP-N-acetylglucosamine 1-carboxyvinyltransferase">
    <location>
        <begin position="1"/>
        <end position="417"/>
    </location>
</feature>
<feature type="active site" description="Proton donor" evidence="1">
    <location>
        <position position="116"/>
    </location>
</feature>
<feature type="binding site" evidence="1">
    <location>
        <begin position="22"/>
        <end position="23"/>
    </location>
    <ligand>
        <name>phosphoenolpyruvate</name>
        <dbReference type="ChEBI" id="CHEBI:58702"/>
    </ligand>
</feature>
<feature type="binding site" evidence="1">
    <location>
        <position position="92"/>
    </location>
    <ligand>
        <name>UDP-N-acetyl-alpha-D-glucosamine</name>
        <dbReference type="ChEBI" id="CHEBI:57705"/>
    </ligand>
</feature>
<feature type="binding site" evidence="1">
    <location>
        <position position="304"/>
    </location>
    <ligand>
        <name>UDP-N-acetyl-alpha-D-glucosamine</name>
        <dbReference type="ChEBI" id="CHEBI:57705"/>
    </ligand>
</feature>
<feature type="binding site" evidence="1">
    <location>
        <position position="326"/>
    </location>
    <ligand>
        <name>UDP-N-acetyl-alpha-D-glucosamine</name>
        <dbReference type="ChEBI" id="CHEBI:57705"/>
    </ligand>
</feature>
<feature type="modified residue" description="2-(S-cysteinyl)pyruvic acid O-phosphothioketal" evidence="1">
    <location>
        <position position="116"/>
    </location>
</feature>